<dbReference type="EC" id="2.7.1.21" evidence="1"/>
<dbReference type="EMBL" id="AF028720">
    <property type="protein sequence ID" value="AAC98909.1"/>
    <property type="molecule type" value="Genomic_DNA"/>
</dbReference>
<dbReference type="PIR" id="T47123">
    <property type="entry name" value="T47123"/>
</dbReference>
<dbReference type="SMR" id="Q9ZIG2"/>
<dbReference type="GO" id="GO:0005829">
    <property type="term" value="C:cytosol"/>
    <property type="evidence" value="ECO:0007669"/>
    <property type="project" value="TreeGrafter"/>
</dbReference>
<dbReference type="GO" id="GO:0005524">
    <property type="term" value="F:ATP binding"/>
    <property type="evidence" value="ECO:0007669"/>
    <property type="project" value="UniProtKB-UniRule"/>
</dbReference>
<dbReference type="GO" id="GO:0004797">
    <property type="term" value="F:thymidine kinase activity"/>
    <property type="evidence" value="ECO:0007669"/>
    <property type="project" value="UniProtKB-UniRule"/>
</dbReference>
<dbReference type="GO" id="GO:0008270">
    <property type="term" value="F:zinc ion binding"/>
    <property type="evidence" value="ECO:0007669"/>
    <property type="project" value="UniProtKB-UniRule"/>
</dbReference>
<dbReference type="GO" id="GO:0071897">
    <property type="term" value="P:DNA biosynthetic process"/>
    <property type="evidence" value="ECO:0007669"/>
    <property type="project" value="UniProtKB-KW"/>
</dbReference>
<dbReference type="GO" id="GO:0046104">
    <property type="term" value="P:thymidine metabolic process"/>
    <property type="evidence" value="ECO:0007669"/>
    <property type="project" value="TreeGrafter"/>
</dbReference>
<dbReference type="FunFam" id="3.40.50.300:FF:000384">
    <property type="entry name" value="Thymidine kinase"/>
    <property type="match status" value="1"/>
</dbReference>
<dbReference type="Gene3D" id="3.30.60.20">
    <property type="match status" value="1"/>
</dbReference>
<dbReference type="Gene3D" id="3.40.50.300">
    <property type="entry name" value="P-loop containing nucleotide triphosphate hydrolases"/>
    <property type="match status" value="1"/>
</dbReference>
<dbReference type="HAMAP" id="MF_00124">
    <property type="entry name" value="Thymidine_kinase"/>
    <property type="match status" value="1"/>
</dbReference>
<dbReference type="InterPro" id="IPR027417">
    <property type="entry name" value="P-loop_NTPase"/>
</dbReference>
<dbReference type="InterPro" id="IPR001267">
    <property type="entry name" value="Thymidine_kinase"/>
</dbReference>
<dbReference type="InterPro" id="IPR020633">
    <property type="entry name" value="Thymidine_kinase_CS"/>
</dbReference>
<dbReference type="NCBIfam" id="NF003296">
    <property type="entry name" value="PRK04296.1-1"/>
    <property type="match status" value="1"/>
</dbReference>
<dbReference type="PANTHER" id="PTHR11441">
    <property type="entry name" value="THYMIDINE KINASE"/>
    <property type="match status" value="1"/>
</dbReference>
<dbReference type="PANTHER" id="PTHR11441:SF0">
    <property type="entry name" value="THYMIDINE KINASE, CYTOSOLIC"/>
    <property type="match status" value="1"/>
</dbReference>
<dbReference type="Pfam" id="PF00265">
    <property type="entry name" value="TK"/>
    <property type="match status" value="1"/>
</dbReference>
<dbReference type="PIRSF" id="PIRSF035805">
    <property type="entry name" value="TK_cell"/>
    <property type="match status" value="1"/>
</dbReference>
<dbReference type="SUPFAM" id="SSF57716">
    <property type="entry name" value="Glucocorticoid receptor-like (DNA-binding domain)"/>
    <property type="match status" value="1"/>
</dbReference>
<dbReference type="SUPFAM" id="SSF52540">
    <property type="entry name" value="P-loop containing nucleoside triphosphate hydrolases"/>
    <property type="match status" value="1"/>
</dbReference>
<dbReference type="PROSITE" id="PS00603">
    <property type="entry name" value="TK_CELLULAR_TYPE"/>
    <property type="match status" value="1"/>
</dbReference>
<accession>Q9ZIG2</accession>
<name>KITH_RHOSI</name>
<reference key="1">
    <citation type="submission" date="1997-10" db="EMBL/GenBank/DDBJ databases">
        <title>Nucleotide sequence and deduced amino acid sequence of thymidine kinase gene (tdk) from Rhodothermus sp. ITI 518.</title>
        <authorList>
            <person name="Blondal T."/>
            <person name="Thorbjarnardottir S.H."/>
            <person name="Kielezawa J."/>
            <person name="Eggertsson G."/>
        </authorList>
    </citation>
    <scope>NUCLEOTIDE SEQUENCE [GENOMIC DNA]</scope>
</reference>
<protein>
    <recommendedName>
        <fullName evidence="1">Thymidine kinase</fullName>
        <ecNumber evidence="1">2.7.1.21</ecNumber>
    </recommendedName>
</protein>
<evidence type="ECO:0000255" key="1">
    <source>
        <dbReference type="HAMAP-Rule" id="MF_00124"/>
    </source>
</evidence>
<evidence type="ECO:0000256" key="2">
    <source>
        <dbReference type="SAM" id="MobiDB-lite"/>
    </source>
</evidence>
<feature type="chain" id="PRO_0000175010" description="Thymidine kinase">
    <location>
        <begin position="1"/>
        <end position="213"/>
    </location>
</feature>
<feature type="region of interest" description="Disordered" evidence="2">
    <location>
        <begin position="185"/>
        <end position="213"/>
    </location>
</feature>
<feature type="compositionally biased region" description="Low complexity" evidence="2">
    <location>
        <begin position="193"/>
        <end position="213"/>
    </location>
</feature>
<feature type="active site" description="Proton acceptor" evidence="1">
    <location>
        <position position="95"/>
    </location>
</feature>
<feature type="binding site" evidence="1">
    <location>
        <begin position="22"/>
        <end position="29"/>
    </location>
    <ligand>
        <name>ATP</name>
        <dbReference type="ChEBI" id="CHEBI:30616"/>
    </ligand>
</feature>
<feature type="binding site" evidence="1">
    <location>
        <begin position="94"/>
        <end position="97"/>
    </location>
    <ligand>
        <name>ATP</name>
        <dbReference type="ChEBI" id="CHEBI:30616"/>
    </ligand>
</feature>
<feature type="binding site" evidence="1">
    <location>
        <position position="151"/>
    </location>
    <ligand>
        <name>Zn(2+)</name>
        <dbReference type="ChEBI" id="CHEBI:29105"/>
    </ligand>
</feature>
<feature type="binding site" evidence="1">
    <location>
        <position position="154"/>
    </location>
    <ligand>
        <name>Zn(2+)</name>
        <dbReference type="ChEBI" id="CHEBI:29105"/>
    </ligand>
</feature>
<feature type="binding site" evidence="1">
    <location>
        <position position="183"/>
    </location>
    <ligand>
        <name>Zn(2+)</name>
        <dbReference type="ChEBI" id="CHEBI:29105"/>
    </ligand>
</feature>
<feature type="binding site" evidence="1">
    <location>
        <position position="186"/>
    </location>
    <ligand>
        <name>Zn(2+)</name>
        <dbReference type="ChEBI" id="CHEBI:29105"/>
    </ligand>
</feature>
<gene>
    <name evidence="1" type="primary">tdk</name>
</gene>
<comment type="catalytic activity">
    <reaction evidence="1">
        <text>thymidine + ATP = dTMP + ADP + H(+)</text>
        <dbReference type="Rhea" id="RHEA:19129"/>
        <dbReference type="ChEBI" id="CHEBI:15378"/>
        <dbReference type="ChEBI" id="CHEBI:17748"/>
        <dbReference type="ChEBI" id="CHEBI:30616"/>
        <dbReference type="ChEBI" id="CHEBI:63528"/>
        <dbReference type="ChEBI" id="CHEBI:456216"/>
        <dbReference type="EC" id="2.7.1.21"/>
    </reaction>
</comment>
<comment type="subunit">
    <text evidence="1">Homotetramer.</text>
</comment>
<comment type="subcellular location">
    <subcellularLocation>
        <location evidence="1">Cytoplasm</location>
    </subcellularLocation>
</comment>
<comment type="similarity">
    <text evidence="1">Belongs to the thymidine kinase family.</text>
</comment>
<keyword id="KW-0067">ATP-binding</keyword>
<keyword id="KW-0963">Cytoplasm</keyword>
<keyword id="KW-0237">DNA synthesis</keyword>
<keyword id="KW-0418">Kinase</keyword>
<keyword id="KW-0479">Metal-binding</keyword>
<keyword id="KW-0547">Nucleotide-binding</keyword>
<keyword id="KW-0808">Transferase</keyword>
<keyword id="KW-0862">Zinc</keyword>
<proteinExistence type="inferred from homology"/>
<sequence length="213" mass="23644">MPMEPLILRHGGSVGWIEVICGSMFSGKTEELIRRLRRAQIARQRVEVFKPRMDRRYSETDVVSHDENALRSTPVDSAEQILLLADSADVVGIDEAQFFDMTLVDVCQQLANDGKRVIVAGLDQEYMGRPLEPMPQFMAVAEYVTKLHAICAVCGAPANHSQRLTDEEGRVVLGAADRYEPRCRRCFQPPRPTSTSSLKAPAPAATAPRPELP</sequence>
<organism>
    <name type="scientific">Rhodothermus sp. (strain ITI 518)</name>
    <dbReference type="NCBI Taxonomy" id="71277"/>
    <lineage>
        <taxon>Bacteria</taxon>
        <taxon>Pseudomonadati</taxon>
        <taxon>Rhodothermota</taxon>
        <taxon>Rhodothermia</taxon>
        <taxon>Rhodothermales</taxon>
        <taxon>Rhodothermaceae</taxon>
        <taxon>Rhodothermus</taxon>
    </lineage>
</organism>